<dbReference type="EC" id="3.5.2.9" evidence="1"/>
<dbReference type="EMBL" id="CP000880">
    <property type="protein sequence ID" value="ABX22094.1"/>
    <property type="molecule type" value="Genomic_DNA"/>
</dbReference>
<dbReference type="SMR" id="A9MJN1"/>
<dbReference type="STRING" id="41514.SARI_02222"/>
<dbReference type="KEGG" id="ses:SARI_02222"/>
<dbReference type="HOGENOM" id="CLU_069535_0_0_6"/>
<dbReference type="Proteomes" id="UP000002084">
    <property type="component" value="Chromosome"/>
</dbReference>
<dbReference type="GO" id="GO:0017168">
    <property type="term" value="F:5-oxoprolinase (ATP-hydrolyzing) activity"/>
    <property type="evidence" value="ECO:0007669"/>
    <property type="project" value="UniProtKB-UniRule"/>
</dbReference>
<dbReference type="GO" id="GO:0005524">
    <property type="term" value="F:ATP binding"/>
    <property type="evidence" value="ECO:0007669"/>
    <property type="project" value="UniProtKB-UniRule"/>
</dbReference>
<dbReference type="GO" id="GO:0005975">
    <property type="term" value="P:carbohydrate metabolic process"/>
    <property type="evidence" value="ECO:0007669"/>
    <property type="project" value="InterPro"/>
</dbReference>
<dbReference type="CDD" id="cd10800">
    <property type="entry name" value="LamB_YcsF_YbgL_like"/>
    <property type="match status" value="1"/>
</dbReference>
<dbReference type="Gene3D" id="3.20.20.370">
    <property type="entry name" value="Glycoside hydrolase/deacetylase"/>
    <property type="match status" value="1"/>
</dbReference>
<dbReference type="HAMAP" id="MF_00691">
    <property type="entry name" value="PxpA"/>
    <property type="match status" value="1"/>
</dbReference>
<dbReference type="InterPro" id="IPR011330">
    <property type="entry name" value="Glyco_hydro/deAcase_b/a-brl"/>
</dbReference>
<dbReference type="InterPro" id="IPR005501">
    <property type="entry name" value="LamB/YcsF/PxpA-like"/>
</dbReference>
<dbReference type="NCBIfam" id="NF003812">
    <property type="entry name" value="PRK05406.1-1"/>
    <property type="match status" value="1"/>
</dbReference>
<dbReference type="NCBIfam" id="NF003814">
    <property type="entry name" value="PRK05406.1-3"/>
    <property type="match status" value="1"/>
</dbReference>
<dbReference type="NCBIfam" id="NF003815">
    <property type="entry name" value="PRK05406.1-4"/>
    <property type="match status" value="1"/>
</dbReference>
<dbReference type="NCBIfam" id="NF003816">
    <property type="entry name" value="PRK05406.1-5"/>
    <property type="match status" value="1"/>
</dbReference>
<dbReference type="PANTHER" id="PTHR30292:SF0">
    <property type="entry name" value="5-OXOPROLINASE SUBUNIT A"/>
    <property type="match status" value="1"/>
</dbReference>
<dbReference type="PANTHER" id="PTHR30292">
    <property type="entry name" value="UNCHARACTERIZED PROTEIN YBGL-RELATED"/>
    <property type="match status" value="1"/>
</dbReference>
<dbReference type="Pfam" id="PF03746">
    <property type="entry name" value="LamB_YcsF"/>
    <property type="match status" value="1"/>
</dbReference>
<dbReference type="SUPFAM" id="SSF88713">
    <property type="entry name" value="Glycoside hydrolase/deacetylase"/>
    <property type="match status" value="1"/>
</dbReference>
<feature type="chain" id="PRO_1000083123" description="5-oxoprolinase subunit A">
    <location>
        <begin position="1"/>
        <end position="244"/>
    </location>
</feature>
<protein>
    <recommendedName>
        <fullName evidence="1">5-oxoprolinase subunit A</fullName>
        <shortName evidence="1">5-OPase subunit A</shortName>
        <ecNumber evidence="1">3.5.2.9</ecNumber>
    </recommendedName>
    <alternativeName>
        <fullName evidence="1">5-oxoprolinase (ATP-hydrolyzing) subunit A</fullName>
    </alternativeName>
</protein>
<accession>A9MJN1</accession>
<sequence>MKIDLNADLGEGFASDSELLTLVSSANIACGFHAGDAQTMLTCVREALKNGVAIGAHPSFPDRDNFGRTAMVLPPETVYAQTLYQIGALGAIVQAQGGVMRHVKPHGMLYNQAAKDPRLAQAIAKAVHDYDSSLILVGLAGSELIRAGERYRLATRQEVFADRGYQADGSLVPRTQPGALILDEGQALAQTLGMVQAGRVKSVTGVWTNVTAQTVCIHGDGEYALAFARRLRAAFNARNIHVSF</sequence>
<organism>
    <name type="scientific">Salmonella arizonae (strain ATCC BAA-731 / CDC346-86 / RSK2980)</name>
    <dbReference type="NCBI Taxonomy" id="41514"/>
    <lineage>
        <taxon>Bacteria</taxon>
        <taxon>Pseudomonadati</taxon>
        <taxon>Pseudomonadota</taxon>
        <taxon>Gammaproteobacteria</taxon>
        <taxon>Enterobacterales</taxon>
        <taxon>Enterobacteriaceae</taxon>
        <taxon>Salmonella</taxon>
    </lineage>
</organism>
<evidence type="ECO:0000255" key="1">
    <source>
        <dbReference type="HAMAP-Rule" id="MF_00691"/>
    </source>
</evidence>
<gene>
    <name evidence="1" type="primary">pxpA</name>
    <name type="ordered locus">SARI_02222</name>
</gene>
<name>PXPA_SALAR</name>
<keyword id="KW-0067">ATP-binding</keyword>
<keyword id="KW-0378">Hydrolase</keyword>
<keyword id="KW-0547">Nucleotide-binding</keyword>
<keyword id="KW-1185">Reference proteome</keyword>
<proteinExistence type="inferred from homology"/>
<comment type="function">
    <text evidence="1">Catalyzes the cleavage of 5-oxoproline to form L-glutamate coupled to the hydrolysis of ATP to ADP and inorganic phosphate.</text>
</comment>
<comment type="catalytic activity">
    <reaction evidence="1">
        <text>5-oxo-L-proline + ATP + 2 H2O = L-glutamate + ADP + phosphate + H(+)</text>
        <dbReference type="Rhea" id="RHEA:10348"/>
        <dbReference type="ChEBI" id="CHEBI:15377"/>
        <dbReference type="ChEBI" id="CHEBI:15378"/>
        <dbReference type="ChEBI" id="CHEBI:29985"/>
        <dbReference type="ChEBI" id="CHEBI:30616"/>
        <dbReference type="ChEBI" id="CHEBI:43474"/>
        <dbReference type="ChEBI" id="CHEBI:58402"/>
        <dbReference type="ChEBI" id="CHEBI:456216"/>
        <dbReference type="EC" id="3.5.2.9"/>
    </reaction>
</comment>
<comment type="subunit">
    <text evidence="1">Forms a complex composed of PxpA, PxpB and PxpC.</text>
</comment>
<comment type="similarity">
    <text evidence="1">Belongs to the LamB/PxpA family.</text>
</comment>
<reference key="1">
    <citation type="submission" date="2007-11" db="EMBL/GenBank/DDBJ databases">
        <authorList>
            <consortium name="The Salmonella enterica serovar Arizonae Genome Sequencing Project"/>
            <person name="McClelland M."/>
            <person name="Sanderson E.K."/>
            <person name="Porwollik S."/>
            <person name="Spieth J."/>
            <person name="Clifton W.S."/>
            <person name="Fulton R."/>
            <person name="Chunyan W."/>
            <person name="Wollam A."/>
            <person name="Shah N."/>
            <person name="Pepin K."/>
            <person name="Bhonagiri V."/>
            <person name="Nash W."/>
            <person name="Johnson M."/>
            <person name="Thiruvilangam P."/>
            <person name="Wilson R."/>
        </authorList>
    </citation>
    <scope>NUCLEOTIDE SEQUENCE [LARGE SCALE GENOMIC DNA]</scope>
    <source>
        <strain>ATCC BAA-731 / CDC346-86 / RSK2980</strain>
    </source>
</reference>